<sequence>MRGMGNMQGMMKKMQKMQKEMMEAQEALNAEQFEGVAGGGMVKVTVSGQREVVSVNLDESVVDPEDIEMLQDLIVIATNEALKKVEEKTNSTMGKFTQGLNLPF</sequence>
<proteinExistence type="inferred from homology"/>
<organism>
    <name type="scientific">Lysinibacillus sphaericus (strain C3-41)</name>
    <dbReference type="NCBI Taxonomy" id="444177"/>
    <lineage>
        <taxon>Bacteria</taxon>
        <taxon>Bacillati</taxon>
        <taxon>Bacillota</taxon>
        <taxon>Bacilli</taxon>
        <taxon>Bacillales</taxon>
        <taxon>Bacillaceae</taxon>
        <taxon>Lysinibacillus</taxon>
    </lineage>
</organism>
<protein>
    <recommendedName>
        <fullName evidence="1">Nucleoid-associated protein Bsph_0039</fullName>
    </recommendedName>
</protein>
<accession>B1HS62</accession>
<comment type="function">
    <text evidence="1">Binds to DNA and alters its conformation. May be involved in regulation of gene expression, nucleoid organization and DNA protection.</text>
</comment>
<comment type="subunit">
    <text evidence="1">Homodimer.</text>
</comment>
<comment type="subcellular location">
    <subcellularLocation>
        <location evidence="1">Cytoplasm</location>
        <location evidence="1">Nucleoid</location>
    </subcellularLocation>
</comment>
<comment type="similarity">
    <text evidence="1">Belongs to the YbaB/EbfC family.</text>
</comment>
<reference key="1">
    <citation type="journal article" date="2008" name="J. Bacteriol.">
        <title>Complete genome sequence of the mosquitocidal bacterium Bacillus sphaericus C3-41 and comparison with those of closely related Bacillus species.</title>
        <authorList>
            <person name="Hu X."/>
            <person name="Fan W."/>
            <person name="Han B."/>
            <person name="Liu H."/>
            <person name="Zheng D."/>
            <person name="Li Q."/>
            <person name="Dong W."/>
            <person name="Yan J."/>
            <person name="Gao M."/>
            <person name="Berry C."/>
            <person name="Yuan Z."/>
        </authorList>
    </citation>
    <scope>NUCLEOTIDE SEQUENCE [LARGE SCALE GENOMIC DNA]</scope>
    <source>
        <strain>C3-41</strain>
    </source>
</reference>
<evidence type="ECO:0000255" key="1">
    <source>
        <dbReference type="HAMAP-Rule" id="MF_00274"/>
    </source>
</evidence>
<evidence type="ECO:0000256" key="2">
    <source>
        <dbReference type="SAM" id="MobiDB-lite"/>
    </source>
</evidence>
<dbReference type="EMBL" id="CP000817">
    <property type="protein sequence ID" value="ACA37680.1"/>
    <property type="molecule type" value="Genomic_DNA"/>
</dbReference>
<dbReference type="RefSeq" id="WP_004233957.1">
    <property type="nucleotide sequence ID" value="NC_010382.1"/>
</dbReference>
<dbReference type="SMR" id="B1HS62"/>
<dbReference type="EnsemblBacteria" id="ACA37680">
    <property type="protein sequence ID" value="ACA37680"/>
    <property type="gene ID" value="Bsph_0039"/>
</dbReference>
<dbReference type="KEGG" id="lsp:Bsph_0039"/>
<dbReference type="HOGENOM" id="CLU_140930_1_0_9"/>
<dbReference type="Proteomes" id="UP000002164">
    <property type="component" value="Chromosome"/>
</dbReference>
<dbReference type="GO" id="GO:0043590">
    <property type="term" value="C:bacterial nucleoid"/>
    <property type="evidence" value="ECO:0007669"/>
    <property type="project" value="UniProtKB-UniRule"/>
</dbReference>
<dbReference type="GO" id="GO:0005829">
    <property type="term" value="C:cytosol"/>
    <property type="evidence" value="ECO:0007669"/>
    <property type="project" value="TreeGrafter"/>
</dbReference>
<dbReference type="GO" id="GO:0003677">
    <property type="term" value="F:DNA binding"/>
    <property type="evidence" value="ECO:0007669"/>
    <property type="project" value="UniProtKB-UniRule"/>
</dbReference>
<dbReference type="FunFam" id="3.30.1310.10:FF:000002">
    <property type="entry name" value="Nucleoid-associated protein IKC_06587"/>
    <property type="match status" value="1"/>
</dbReference>
<dbReference type="Gene3D" id="3.30.1310.10">
    <property type="entry name" value="Nucleoid-associated protein YbaB-like domain"/>
    <property type="match status" value="1"/>
</dbReference>
<dbReference type="HAMAP" id="MF_00274">
    <property type="entry name" value="DNA_YbaB_EbfC"/>
    <property type="match status" value="1"/>
</dbReference>
<dbReference type="InterPro" id="IPR036894">
    <property type="entry name" value="YbaB-like_sf"/>
</dbReference>
<dbReference type="InterPro" id="IPR004401">
    <property type="entry name" value="YbaB/EbfC"/>
</dbReference>
<dbReference type="NCBIfam" id="TIGR00103">
    <property type="entry name" value="DNA_YbaB_EbfC"/>
    <property type="match status" value="1"/>
</dbReference>
<dbReference type="PANTHER" id="PTHR33449">
    <property type="entry name" value="NUCLEOID-ASSOCIATED PROTEIN YBAB"/>
    <property type="match status" value="1"/>
</dbReference>
<dbReference type="PANTHER" id="PTHR33449:SF1">
    <property type="entry name" value="NUCLEOID-ASSOCIATED PROTEIN YBAB"/>
    <property type="match status" value="1"/>
</dbReference>
<dbReference type="Pfam" id="PF02575">
    <property type="entry name" value="YbaB_DNA_bd"/>
    <property type="match status" value="1"/>
</dbReference>
<dbReference type="PIRSF" id="PIRSF004555">
    <property type="entry name" value="UCP004555"/>
    <property type="match status" value="1"/>
</dbReference>
<dbReference type="SUPFAM" id="SSF82607">
    <property type="entry name" value="YbaB-like"/>
    <property type="match status" value="1"/>
</dbReference>
<name>Y039_LYSSC</name>
<feature type="chain" id="PRO_1000114621" description="Nucleoid-associated protein Bsph_0039">
    <location>
        <begin position="1"/>
        <end position="104"/>
    </location>
</feature>
<feature type="region of interest" description="Disordered" evidence="2">
    <location>
        <begin position="1"/>
        <end position="22"/>
    </location>
</feature>
<feature type="compositionally biased region" description="Low complexity" evidence="2">
    <location>
        <begin position="1"/>
        <end position="12"/>
    </location>
</feature>
<gene>
    <name type="ordered locus">Bsph_0039</name>
</gene>
<keyword id="KW-0963">Cytoplasm</keyword>
<keyword id="KW-0238">DNA-binding</keyword>